<name>DRE2_CRYHO</name>
<reference key="1">
    <citation type="journal article" date="2004" name="Nature">
        <title>The genome of Cryptosporidium hominis.</title>
        <authorList>
            <person name="Xu P."/>
            <person name="Widmer G."/>
            <person name="Wang Y."/>
            <person name="Ozaki L.S."/>
            <person name="Alves J.M."/>
            <person name="Serrano M.G."/>
            <person name="Puiu D."/>
            <person name="Manque P."/>
            <person name="Akiyoshi D."/>
            <person name="Mackey A.J."/>
            <person name="Pearson W.R."/>
            <person name="Dear P.H."/>
            <person name="Bankier A.T."/>
            <person name="Peterson D.L."/>
            <person name="Abrahamsen M.S."/>
            <person name="Kapur V."/>
            <person name="Tzipori S."/>
            <person name="Buck G.A."/>
        </authorList>
    </citation>
    <scope>NUCLEOTIDE SEQUENCE [LARGE SCALE GENOMIC DNA]</scope>
    <source>
        <strain>TU502</strain>
    </source>
</reference>
<gene>
    <name type="ORF">Chro.60473</name>
</gene>
<feature type="chain" id="PRO_0000392351" description="Anamorsin homolog">
    <location>
        <begin position="1"/>
        <end position="298"/>
    </location>
</feature>
<feature type="region of interest" description="N-terminal SAM-like domain" evidence="1">
    <location>
        <begin position="1"/>
        <end position="143"/>
    </location>
</feature>
<feature type="region of interest" description="Linker" evidence="1">
    <location>
        <begin position="143"/>
        <end position="162"/>
    </location>
</feature>
<feature type="region of interest" description="Fe-S binding site A" evidence="1">
    <location>
        <begin position="175"/>
        <end position="187"/>
    </location>
</feature>
<feature type="region of interest" description="Fe-S binding site B" evidence="1">
    <location>
        <begin position="218"/>
        <end position="232"/>
    </location>
</feature>
<feature type="short sequence motif" description="Cx2C motif 1" evidence="1">
    <location>
        <begin position="218"/>
        <end position="221"/>
    </location>
</feature>
<feature type="short sequence motif" description="Cx2C motif 2" evidence="1">
    <location>
        <begin position="229"/>
        <end position="232"/>
    </location>
</feature>
<feature type="binding site" evidence="1">
    <location>
        <position position="175"/>
    </location>
    <ligand>
        <name>[2Fe-2S] cluster</name>
        <dbReference type="ChEBI" id="CHEBI:190135"/>
    </ligand>
</feature>
<feature type="binding site" evidence="1">
    <location>
        <position position="182"/>
    </location>
    <ligand>
        <name>[2Fe-2S] cluster</name>
        <dbReference type="ChEBI" id="CHEBI:190135"/>
    </ligand>
</feature>
<feature type="binding site" evidence="1">
    <location>
        <position position="185"/>
    </location>
    <ligand>
        <name>[2Fe-2S] cluster</name>
        <dbReference type="ChEBI" id="CHEBI:190135"/>
    </ligand>
</feature>
<feature type="binding site" evidence="1">
    <location>
        <position position="187"/>
    </location>
    <ligand>
        <name>[2Fe-2S] cluster</name>
        <dbReference type="ChEBI" id="CHEBI:190135"/>
    </ligand>
</feature>
<feature type="binding site" evidence="1">
    <location>
        <position position="218"/>
    </location>
    <ligand>
        <name>[4Fe-4S] cluster</name>
        <dbReference type="ChEBI" id="CHEBI:49883"/>
    </ligand>
</feature>
<feature type="binding site" evidence="1">
    <location>
        <position position="221"/>
    </location>
    <ligand>
        <name>[4Fe-4S] cluster</name>
        <dbReference type="ChEBI" id="CHEBI:49883"/>
    </ligand>
</feature>
<feature type="binding site" evidence="1">
    <location>
        <position position="229"/>
    </location>
    <ligand>
        <name>[4Fe-4S] cluster</name>
        <dbReference type="ChEBI" id="CHEBI:49883"/>
    </ligand>
</feature>
<feature type="binding site" evidence="1">
    <location>
        <position position="232"/>
    </location>
    <ligand>
        <name>[4Fe-4S] cluster</name>
        <dbReference type="ChEBI" id="CHEBI:49883"/>
    </ligand>
</feature>
<organism>
    <name type="scientific">Cryptosporidium hominis</name>
    <dbReference type="NCBI Taxonomy" id="237895"/>
    <lineage>
        <taxon>Eukaryota</taxon>
        <taxon>Sar</taxon>
        <taxon>Alveolata</taxon>
        <taxon>Apicomplexa</taxon>
        <taxon>Conoidasida</taxon>
        <taxon>Coccidia</taxon>
        <taxon>Eucoccidiorida</taxon>
        <taxon>Eimeriorina</taxon>
        <taxon>Cryptosporidiidae</taxon>
        <taxon>Cryptosporidium</taxon>
    </lineage>
</organism>
<sequence length="298" mass="32911">MTQLIITYQSDSKLEESEVFLSELNRIKKEEDKFAKFSSLSDLRAIVKKGEFRIVSIYLSSGSILAEIFTFEFLKEFYGVLDFGSVLKVNILALDSIDKVKAFERNLLFSGFIKVKKLKGDGLNSSDSDFEIVIKAEKPSWKPEEGKVLVDDIDLEGSVPDIKNYVPLGQGKESCKSKERACNNCNCGRADLEKEIGIEAARKVYQEKVETGTARSSCGNCYLGDAFRCSGCPYKGMPAFKPGEKVSLANAEGDANDRTVDMNLIHEEKVDLITTTFDDDGSGVSNVQSKGGVLKLNI</sequence>
<evidence type="ECO:0000255" key="1">
    <source>
        <dbReference type="HAMAP-Rule" id="MF_03115"/>
    </source>
</evidence>
<proteinExistence type="inferred from homology"/>
<keyword id="KW-0001">2Fe-2S</keyword>
<keyword id="KW-0004">4Fe-4S</keyword>
<keyword id="KW-0963">Cytoplasm</keyword>
<keyword id="KW-0408">Iron</keyword>
<keyword id="KW-0411">Iron-sulfur</keyword>
<keyword id="KW-0479">Metal-binding</keyword>
<keyword id="KW-0496">Mitochondrion</keyword>
<accession>Q5CKJ0</accession>
<dbReference type="EMBL" id="AAEL01000082">
    <property type="protein sequence ID" value="EAL37122.1"/>
    <property type="molecule type" value="Genomic_DNA"/>
</dbReference>
<dbReference type="RefSeq" id="XP_667353.1">
    <property type="nucleotide sequence ID" value="XM_662261.1"/>
</dbReference>
<dbReference type="SMR" id="Q5CKJ0"/>
<dbReference type="GeneID" id="3413655"/>
<dbReference type="KEGG" id="cho:Chro.60473"/>
<dbReference type="VEuPathDB" id="CryptoDB:Chro.60473"/>
<dbReference type="VEuPathDB" id="CryptoDB:ChTU502y2012_417g0165"/>
<dbReference type="VEuPathDB" id="CryptoDB:CHUDEA6_4130"/>
<dbReference type="VEuPathDB" id="CryptoDB:GY17_00000431"/>
<dbReference type="OrthoDB" id="311633at2759"/>
<dbReference type="GO" id="GO:0005758">
    <property type="term" value="C:mitochondrial intermembrane space"/>
    <property type="evidence" value="ECO:0007669"/>
    <property type="project" value="UniProtKB-SubCell"/>
</dbReference>
<dbReference type="GO" id="GO:0051537">
    <property type="term" value="F:2 iron, 2 sulfur cluster binding"/>
    <property type="evidence" value="ECO:0007669"/>
    <property type="project" value="UniProtKB-UniRule"/>
</dbReference>
<dbReference type="GO" id="GO:0051539">
    <property type="term" value="F:4 iron, 4 sulfur cluster binding"/>
    <property type="evidence" value="ECO:0007669"/>
    <property type="project" value="UniProtKB-KW"/>
</dbReference>
<dbReference type="GO" id="GO:0009055">
    <property type="term" value="F:electron transfer activity"/>
    <property type="evidence" value="ECO:0007669"/>
    <property type="project" value="UniProtKB-UniRule"/>
</dbReference>
<dbReference type="GO" id="GO:0046872">
    <property type="term" value="F:metal ion binding"/>
    <property type="evidence" value="ECO:0007669"/>
    <property type="project" value="UniProtKB-KW"/>
</dbReference>
<dbReference type="GO" id="GO:0016226">
    <property type="term" value="P:iron-sulfur cluster assembly"/>
    <property type="evidence" value="ECO:0007669"/>
    <property type="project" value="UniProtKB-UniRule"/>
</dbReference>
<dbReference type="HAMAP" id="MF_03115">
    <property type="entry name" value="Anamorsin"/>
    <property type="match status" value="1"/>
</dbReference>
<dbReference type="InterPro" id="IPR007785">
    <property type="entry name" value="Anamorsin"/>
</dbReference>
<dbReference type="InterPro" id="IPR046408">
    <property type="entry name" value="CIAPIN1"/>
</dbReference>
<dbReference type="PANTHER" id="PTHR13273">
    <property type="entry name" value="ANAMORSIN"/>
    <property type="match status" value="1"/>
</dbReference>
<dbReference type="PANTHER" id="PTHR13273:SF14">
    <property type="entry name" value="ANAMORSIN"/>
    <property type="match status" value="1"/>
</dbReference>
<dbReference type="Pfam" id="PF05093">
    <property type="entry name" value="CIAPIN1"/>
    <property type="match status" value="1"/>
</dbReference>
<protein>
    <recommendedName>
        <fullName evidence="1">Anamorsin homolog</fullName>
    </recommendedName>
    <alternativeName>
        <fullName evidence="1">Fe-S cluster assembly protein DRE2 homolog</fullName>
    </alternativeName>
</protein>
<comment type="function">
    <text evidence="1">Component of the cytosolic iron-sulfur (Fe-S) protein assembly (CIA) machinery. Required for the maturation of extramitochondrial Fe-S proteins. Part of an electron transfer chain functioning in an early step of cytosolic Fe-S biogenesis, facilitating the de novo assembly of a [4Fe-4S] cluster on the cytosolic Fe-S scaffold complex. Electrons are transferred from NADPH via a FAD- and FMN-containing diflavin oxidoreductase. Together with the diflavin oxidoreductase, also required for the assembly of the diferric tyrosyl radical cofactor of ribonucleotide reductase (RNR), probably by providing electrons for reduction during radical cofactor maturation in the catalytic small subunit.</text>
</comment>
<comment type="cofactor">
    <cofactor evidence="1">
        <name>[2Fe-2S] cluster</name>
        <dbReference type="ChEBI" id="CHEBI:190135"/>
    </cofactor>
</comment>
<comment type="cofactor">
    <cofactor evidence="1">
        <name>[4Fe-4S] cluster</name>
        <dbReference type="ChEBI" id="CHEBI:49883"/>
    </cofactor>
</comment>
<comment type="subunit">
    <text evidence="1">Monomer.</text>
</comment>
<comment type="subcellular location">
    <subcellularLocation>
        <location evidence="1">Cytoplasm</location>
    </subcellularLocation>
    <subcellularLocation>
        <location evidence="1">Mitochondrion intermembrane space</location>
    </subcellularLocation>
</comment>
<comment type="domain">
    <text evidence="1">The C-terminal domain binds 2 Fe-S clusters but is otherwise mostly in an intrinsically disordered conformation.</text>
</comment>
<comment type="domain">
    <text evidence="1">The N-terminal domain has structural similarity with S-adenosyl-L-methionine-dependent methyltransferases, but does not bind S-adenosyl-L-methionine. It is required for correct assembly of the 2 Fe-S clusters.</text>
</comment>
<comment type="domain">
    <text evidence="1">The twin Cx2C motifs are involved in the recognition by the mitochondrial MIA40-ERV1 disulfide relay system. The formation of 2 disulfide bonds in the Cx2C motifs through dithiol/disulfide exchange reactions effectively traps the protein in the mitochondrial intermembrane space.</text>
</comment>
<comment type="similarity">
    <text evidence="1">Belongs to the anamorsin family.</text>
</comment>